<sequence>MIQEQTMLNVADNSGARRVMCIKVLGGSHRRYAGVGDIIKITIKEAIPRGKVKKGDVLKAVVVRTKKGVRRPDGSVIRFDGNACVLLNNNSEQPIGTRIFGPVTRELRSEKFMKIISLAPEVL</sequence>
<organism>
    <name type="scientific">Escherichia coli O139:H28 (strain E24377A / ETEC)</name>
    <dbReference type="NCBI Taxonomy" id="331111"/>
    <lineage>
        <taxon>Bacteria</taxon>
        <taxon>Pseudomonadati</taxon>
        <taxon>Pseudomonadota</taxon>
        <taxon>Gammaproteobacteria</taxon>
        <taxon>Enterobacterales</taxon>
        <taxon>Enterobacteriaceae</taxon>
        <taxon>Escherichia</taxon>
    </lineage>
</organism>
<dbReference type="EMBL" id="CP000800">
    <property type="protein sequence ID" value="ABV17577.1"/>
    <property type="molecule type" value="Genomic_DNA"/>
</dbReference>
<dbReference type="RefSeq" id="WP_000613955.1">
    <property type="nucleotide sequence ID" value="NC_009801.1"/>
</dbReference>
<dbReference type="EMDB" id="EMD-8815"/>
<dbReference type="SMR" id="A7ZSJ9"/>
<dbReference type="GeneID" id="93778677"/>
<dbReference type="KEGG" id="ecw:EcE24377A_3793"/>
<dbReference type="HOGENOM" id="CLU_095071_2_1_6"/>
<dbReference type="Proteomes" id="UP000001122">
    <property type="component" value="Chromosome"/>
</dbReference>
<dbReference type="GO" id="GO:0022625">
    <property type="term" value="C:cytosolic large ribosomal subunit"/>
    <property type="evidence" value="ECO:0007669"/>
    <property type="project" value="TreeGrafter"/>
</dbReference>
<dbReference type="GO" id="GO:0070180">
    <property type="term" value="F:large ribosomal subunit rRNA binding"/>
    <property type="evidence" value="ECO:0007669"/>
    <property type="project" value="TreeGrafter"/>
</dbReference>
<dbReference type="GO" id="GO:0003735">
    <property type="term" value="F:structural constituent of ribosome"/>
    <property type="evidence" value="ECO:0007669"/>
    <property type="project" value="InterPro"/>
</dbReference>
<dbReference type="GO" id="GO:0006412">
    <property type="term" value="P:translation"/>
    <property type="evidence" value="ECO:0007669"/>
    <property type="project" value="UniProtKB-UniRule"/>
</dbReference>
<dbReference type="CDD" id="cd00337">
    <property type="entry name" value="Ribosomal_uL14"/>
    <property type="match status" value="1"/>
</dbReference>
<dbReference type="FunFam" id="2.40.150.20:FF:000001">
    <property type="entry name" value="50S ribosomal protein L14"/>
    <property type="match status" value="1"/>
</dbReference>
<dbReference type="Gene3D" id="2.40.150.20">
    <property type="entry name" value="Ribosomal protein L14"/>
    <property type="match status" value="1"/>
</dbReference>
<dbReference type="HAMAP" id="MF_01367">
    <property type="entry name" value="Ribosomal_uL14"/>
    <property type="match status" value="1"/>
</dbReference>
<dbReference type="InterPro" id="IPR000218">
    <property type="entry name" value="Ribosomal_uL14"/>
</dbReference>
<dbReference type="InterPro" id="IPR005745">
    <property type="entry name" value="Ribosomal_uL14_bac-type"/>
</dbReference>
<dbReference type="InterPro" id="IPR019972">
    <property type="entry name" value="Ribosomal_uL14_CS"/>
</dbReference>
<dbReference type="InterPro" id="IPR036853">
    <property type="entry name" value="Ribosomal_uL14_sf"/>
</dbReference>
<dbReference type="NCBIfam" id="TIGR01067">
    <property type="entry name" value="rplN_bact"/>
    <property type="match status" value="1"/>
</dbReference>
<dbReference type="PANTHER" id="PTHR11761">
    <property type="entry name" value="50S/60S RIBOSOMAL PROTEIN L14/L23"/>
    <property type="match status" value="1"/>
</dbReference>
<dbReference type="PANTHER" id="PTHR11761:SF3">
    <property type="entry name" value="LARGE RIBOSOMAL SUBUNIT PROTEIN UL14M"/>
    <property type="match status" value="1"/>
</dbReference>
<dbReference type="Pfam" id="PF00238">
    <property type="entry name" value="Ribosomal_L14"/>
    <property type="match status" value="1"/>
</dbReference>
<dbReference type="SMART" id="SM01374">
    <property type="entry name" value="Ribosomal_L14"/>
    <property type="match status" value="1"/>
</dbReference>
<dbReference type="SUPFAM" id="SSF50193">
    <property type="entry name" value="Ribosomal protein L14"/>
    <property type="match status" value="1"/>
</dbReference>
<dbReference type="PROSITE" id="PS00049">
    <property type="entry name" value="RIBOSOMAL_L14"/>
    <property type="match status" value="1"/>
</dbReference>
<proteinExistence type="inferred from homology"/>
<comment type="function">
    <text evidence="1">Binds to 23S rRNA. Forms part of two intersubunit bridges in the 70S ribosome.</text>
</comment>
<comment type="subunit">
    <text evidence="1">Part of the 50S ribosomal subunit. Forms a cluster with proteins L3 and L19. In the 70S ribosome, L14 and L19 interact and together make contacts with the 16S rRNA in bridges B5 and B8.</text>
</comment>
<comment type="similarity">
    <text evidence="1">Belongs to the universal ribosomal protein uL14 family.</text>
</comment>
<evidence type="ECO:0000255" key="1">
    <source>
        <dbReference type="HAMAP-Rule" id="MF_01367"/>
    </source>
</evidence>
<evidence type="ECO:0000305" key="2"/>
<accession>A7ZSJ9</accession>
<name>RL14_ECO24</name>
<keyword id="KW-1185">Reference proteome</keyword>
<keyword id="KW-0687">Ribonucleoprotein</keyword>
<keyword id="KW-0689">Ribosomal protein</keyword>
<keyword id="KW-0694">RNA-binding</keyword>
<keyword id="KW-0699">rRNA-binding</keyword>
<feature type="chain" id="PRO_1000068005" description="Large ribosomal subunit protein uL14">
    <location>
        <begin position="1"/>
        <end position="123"/>
    </location>
</feature>
<protein>
    <recommendedName>
        <fullName evidence="1">Large ribosomal subunit protein uL14</fullName>
    </recommendedName>
    <alternativeName>
        <fullName evidence="2">50S ribosomal protein L14</fullName>
    </alternativeName>
</protein>
<reference key="1">
    <citation type="journal article" date="2008" name="J. Bacteriol.">
        <title>The pangenome structure of Escherichia coli: comparative genomic analysis of E. coli commensal and pathogenic isolates.</title>
        <authorList>
            <person name="Rasko D.A."/>
            <person name="Rosovitz M.J."/>
            <person name="Myers G.S.A."/>
            <person name="Mongodin E.F."/>
            <person name="Fricke W.F."/>
            <person name="Gajer P."/>
            <person name="Crabtree J."/>
            <person name="Sebaihia M."/>
            <person name="Thomson N.R."/>
            <person name="Chaudhuri R."/>
            <person name="Henderson I.R."/>
            <person name="Sperandio V."/>
            <person name="Ravel J."/>
        </authorList>
    </citation>
    <scope>NUCLEOTIDE SEQUENCE [LARGE SCALE GENOMIC DNA]</scope>
    <source>
        <strain>E24377A / ETEC</strain>
    </source>
</reference>
<gene>
    <name evidence="1" type="primary">rplN</name>
    <name type="ordered locus">EcE24377A_3793</name>
</gene>